<gene>
    <name evidence="4" type="primary">CCL13</name>
</gene>
<keyword id="KW-0067">ATP-binding</keyword>
<keyword id="KW-0963">Cytoplasm</keyword>
<keyword id="KW-0436">Ligase</keyword>
<keyword id="KW-0547">Nucleotide-binding</keyword>
<organism>
    <name type="scientific">Humulus lupulus</name>
    <name type="common">European hop</name>
    <dbReference type="NCBI Taxonomy" id="3486"/>
    <lineage>
        <taxon>Eukaryota</taxon>
        <taxon>Viridiplantae</taxon>
        <taxon>Streptophyta</taxon>
        <taxon>Embryophyta</taxon>
        <taxon>Tracheophyta</taxon>
        <taxon>Spermatophyta</taxon>
        <taxon>Magnoliopsida</taxon>
        <taxon>eudicotyledons</taxon>
        <taxon>Gunneridae</taxon>
        <taxon>Pentapetalae</taxon>
        <taxon>rosids</taxon>
        <taxon>fabids</taxon>
        <taxon>Rosales</taxon>
        <taxon>Cannabaceae</taxon>
        <taxon>Humulus</taxon>
    </lineage>
</organism>
<feature type="chain" id="PRO_0000452958" description="Probable CoA ligase CCL13">
    <location>
        <begin position="1"/>
        <end position="573"/>
    </location>
</feature>
<feature type="region of interest" description="SBD1" evidence="2">
    <location>
        <begin position="284"/>
        <end position="352"/>
    </location>
</feature>
<feature type="region of interest" description="SBD2" evidence="2">
    <location>
        <begin position="353"/>
        <end position="429"/>
    </location>
</feature>
<feature type="binding site" evidence="3">
    <location>
        <begin position="216"/>
        <end position="224"/>
    </location>
    <ligand>
        <name>ATP</name>
        <dbReference type="ChEBI" id="CHEBI:30616"/>
    </ligand>
</feature>
<feature type="binding site" evidence="3">
    <location>
        <begin position="352"/>
        <end position="357"/>
    </location>
    <ligand>
        <name>ATP</name>
        <dbReference type="ChEBI" id="CHEBI:30616"/>
    </ligand>
</feature>
<feature type="binding site" evidence="3">
    <location>
        <position position="449"/>
    </location>
    <ligand>
        <name>ATP</name>
        <dbReference type="ChEBI" id="CHEBI:30616"/>
    </ligand>
</feature>
<feature type="binding site" evidence="3">
    <location>
        <begin position="461"/>
        <end position="464"/>
    </location>
    <ligand>
        <name>ATP</name>
        <dbReference type="ChEBI" id="CHEBI:30616"/>
    </ligand>
</feature>
<feature type="binding site" evidence="3">
    <location>
        <position position="556"/>
    </location>
    <ligand>
        <name>ATP</name>
        <dbReference type="ChEBI" id="CHEBI:30616"/>
    </ligand>
</feature>
<protein>
    <recommendedName>
        <fullName evidence="6">Probable CoA ligase CCL13</fullName>
        <shortName evidence="4">HlCCL13</shortName>
        <ecNumber evidence="6">6.2.1.-</ecNumber>
    </recommendedName>
</protein>
<reference key="1">
    <citation type="journal article" date="2013" name="Mol. Plant">
        <title>Characterization of the formation of branched short-chain fatty acid:CoAs for bitter acid biosynthesis in hop glandular trichomes.</title>
        <authorList>
            <person name="Xu H."/>
            <person name="Zhang F."/>
            <person name="Liu B."/>
            <person name="Huhman D.V."/>
            <person name="Sumner L.W."/>
            <person name="Dixon R.A."/>
            <person name="Wang G."/>
        </authorList>
    </citation>
    <scope>NUCLEOTIDE SEQUENCE [MRNA]</scope>
    <scope>GENE FAMILY</scope>
    <scope>NOMENCLATURE</scope>
    <source>
        <strain>cv. Nugget</strain>
    </source>
</reference>
<comment type="subcellular location">
    <subcellularLocation>
        <location evidence="1">Cytoplasm</location>
        <location evidence="1">Cytosol</location>
    </subcellularLocation>
</comment>
<comment type="domain">
    <text evidence="2">Both substrate-binding domains (SBD1 and SBD2) are involved in the substrate recognition, and are sufficient to confer the substrate specificity.</text>
</comment>
<comment type="similarity">
    <text evidence="5">Belongs to the ATP-dependent AMP-binding enzyme family.</text>
</comment>
<name>CCL13_HUMLU</name>
<evidence type="ECO:0000250" key="1">
    <source>
        <dbReference type="UniProtKB" id="M4IRL4"/>
    </source>
</evidence>
<evidence type="ECO:0000250" key="2">
    <source>
        <dbReference type="UniProtKB" id="Q42524"/>
    </source>
</evidence>
<evidence type="ECO:0000250" key="3">
    <source>
        <dbReference type="UniProtKB" id="Q81G39"/>
    </source>
</evidence>
<evidence type="ECO:0000303" key="4">
    <source>
    </source>
</evidence>
<evidence type="ECO:0000305" key="5"/>
<evidence type="ECO:0000305" key="6">
    <source>
    </source>
</evidence>
<proteinExistence type="evidence at transcript level"/>
<accession>M4IS92</accession>
<dbReference type="EC" id="6.2.1.-" evidence="6"/>
<dbReference type="EMBL" id="JQ740215">
    <property type="protein sequence ID" value="AGA17930.1"/>
    <property type="molecule type" value="mRNA"/>
</dbReference>
<dbReference type="SMR" id="M4IS92"/>
<dbReference type="GO" id="GO:0005829">
    <property type="term" value="C:cytosol"/>
    <property type="evidence" value="ECO:0000250"/>
    <property type="project" value="UniProtKB"/>
</dbReference>
<dbReference type="GO" id="GO:0005524">
    <property type="term" value="F:ATP binding"/>
    <property type="evidence" value="ECO:0007669"/>
    <property type="project" value="UniProtKB-KW"/>
</dbReference>
<dbReference type="GO" id="GO:0016405">
    <property type="term" value="F:CoA-ligase activity"/>
    <property type="evidence" value="ECO:0000250"/>
    <property type="project" value="UniProtKB"/>
</dbReference>
<dbReference type="CDD" id="cd12118">
    <property type="entry name" value="ttLC_FACS_AEE21_like"/>
    <property type="match status" value="1"/>
</dbReference>
<dbReference type="FunFam" id="3.30.300.30:FF:000008">
    <property type="entry name" value="2,3-dihydroxybenzoate-AMP ligase"/>
    <property type="match status" value="1"/>
</dbReference>
<dbReference type="Gene3D" id="3.30.300.30">
    <property type="match status" value="1"/>
</dbReference>
<dbReference type="Gene3D" id="3.40.50.12780">
    <property type="entry name" value="N-terminal domain of ligase-like"/>
    <property type="match status" value="1"/>
</dbReference>
<dbReference type="InterPro" id="IPR025110">
    <property type="entry name" value="AMP-bd_C"/>
</dbReference>
<dbReference type="InterPro" id="IPR045851">
    <property type="entry name" value="AMP-bd_C_sf"/>
</dbReference>
<dbReference type="InterPro" id="IPR000873">
    <property type="entry name" value="AMP-dep_synth/lig_dom"/>
</dbReference>
<dbReference type="InterPro" id="IPR042099">
    <property type="entry name" value="ANL_N_sf"/>
</dbReference>
<dbReference type="NCBIfam" id="NF006020">
    <property type="entry name" value="PRK08162.1"/>
    <property type="match status" value="1"/>
</dbReference>
<dbReference type="PANTHER" id="PTHR43859">
    <property type="entry name" value="ACYL-ACTIVATING ENZYME"/>
    <property type="match status" value="1"/>
</dbReference>
<dbReference type="PANTHER" id="PTHR43859:SF5">
    <property type="entry name" value="ISOVALERATE--COA LIGASE AAE2"/>
    <property type="match status" value="1"/>
</dbReference>
<dbReference type="Pfam" id="PF00501">
    <property type="entry name" value="AMP-binding"/>
    <property type="match status" value="1"/>
</dbReference>
<dbReference type="Pfam" id="PF13193">
    <property type="entry name" value="AMP-binding_C"/>
    <property type="match status" value="1"/>
</dbReference>
<dbReference type="SUPFAM" id="SSF56801">
    <property type="entry name" value="Acetyl-CoA synthetase-like"/>
    <property type="match status" value="1"/>
</dbReference>
<sequence>MDNYRRLHTPVALCVASPPAPPTTSWKSMEGLVQCSANHVPLSPITFLERSSKAYRDNTSLVYGSVRYTWAQTHHRCLKLASALTTHFGISPGDVVATFSYNIPEIYELHFAVPMAGGILCTLNARNDSAMVSTLLAHSEAKLIFVEPQLLETARAALDLLAQKDIKPPTLVLLTDSESFTSSSYDHYNHLLANGSDDFEIRRPKNECDPISINYTSGTTARPKAVVYSHRGAYLNSIATVLLHGMGTRSVYLWSVPMFHCNGWCFPWGAAAQGATNICIRKVSPKAIFDNIHLHKVTHFGAAPTVLNMIVNSPEGNLHTPLPHKVEVMTGGSPPPPKVIARMEEMGFQVNHIYGLTETHGPATNCVCKPEWDALQPEERYALKARQGLNHLAMEEMDVRDPVSMESVRADGTTIGEVMFRGNTVMSGYFKDLKATEEAFEGGWFRTGDLGVKHEDGYIQLKDRKKDVVISGGENVSTVEVETVLYSHEAVLEAAVVARPDKLWGETPCAFVTLKEGFDNGVSADQIIKFCRDRLPHYMAPKTVVFEELPKTSTGKIQKYILKEKAKAMGSLS</sequence>